<name>HB2D_PIG</name>
<proteinExistence type="evidence at transcript level"/>
<evidence type="ECO:0000255" key="1"/>
<evidence type="ECO:0000255" key="2">
    <source>
        <dbReference type="PROSITE-ProRule" id="PRU00114"/>
    </source>
</evidence>
<evidence type="ECO:0000305" key="3"/>
<feature type="signal peptide">
    <location>
        <begin position="1"/>
        <end position="31"/>
    </location>
</feature>
<feature type="chain" id="PRO_0000019009" description="SLA class II histocompatibility antigen, DQ haplotype D beta chain">
    <location>
        <begin position="32"/>
        <end position="258"/>
    </location>
</feature>
<feature type="topological domain" description="Extracellular" evidence="1">
    <location>
        <begin position="32"/>
        <end position="227"/>
    </location>
</feature>
<feature type="transmembrane region" description="Helical" evidence="1">
    <location>
        <begin position="228"/>
        <end position="248"/>
    </location>
</feature>
<feature type="topological domain" description="Cytoplasmic" evidence="1">
    <location>
        <begin position="249"/>
        <end position="258"/>
    </location>
</feature>
<feature type="domain" description="Ig-like C1-type">
    <location>
        <begin position="126"/>
        <end position="230"/>
    </location>
</feature>
<feature type="region of interest" description="Beta-1">
    <location>
        <begin position="32"/>
        <end position="123"/>
    </location>
</feature>
<feature type="region of interest" description="Beta-2">
    <location>
        <begin position="124"/>
        <end position="217"/>
    </location>
</feature>
<feature type="region of interest" description="Connecting peptide">
    <location>
        <begin position="218"/>
        <end position="227"/>
    </location>
</feature>
<feature type="glycosylation site" description="N-linked (GlcNAc...) asparagine" evidence="1">
    <location>
        <position position="48"/>
    </location>
</feature>
<feature type="disulfide bond" evidence="2">
    <location>
        <begin position="44"/>
        <end position="108"/>
    </location>
</feature>
<feature type="disulfide bond" evidence="2">
    <location>
        <begin position="146"/>
        <end position="202"/>
    </location>
</feature>
<reference key="1">
    <citation type="journal article" date="1990" name="J. Immunol.">
        <title>Class II genes of miniature swine. IV. Characterization and expression of two allelic class II DQB cDNA clones.</title>
        <authorList>
            <person name="Gustafsson K."/>
            <person name="Leguern C."/>
            <person name="Hirsch F."/>
            <person name="Germana S."/>
            <person name="Pratt K."/>
            <person name="Sachs D.H."/>
        </authorList>
    </citation>
    <scope>NUCLEOTIDE SEQUENCE [MRNA]</scope>
</reference>
<dbReference type="EMBL" id="M31498">
    <property type="protein sequence ID" value="AAA31085.1"/>
    <property type="molecule type" value="mRNA"/>
</dbReference>
<dbReference type="SMR" id="P15983"/>
<dbReference type="FunCoup" id="P15983">
    <property type="interactions" value="82"/>
</dbReference>
<dbReference type="GlyGen" id="P15983">
    <property type="glycosylation" value="1 site"/>
</dbReference>
<dbReference type="PeptideAtlas" id="P15983"/>
<dbReference type="InParanoid" id="P15983"/>
<dbReference type="Proteomes" id="UP000008227">
    <property type="component" value="Unplaced"/>
</dbReference>
<dbReference type="Proteomes" id="UP000314985">
    <property type="component" value="Unplaced"/>
</dbReference>
<dbReference type="Proteomes" id="UP000694570">
    <property type="component" value="Unplaced"/>
</dbReference>
<dbReference type="Proteomes" id="UP000694571">
    <property type="component" value="Unplaced"/>
</dbReference>
<dbReference type="Proteomes" id="UP000694720">
    <property type="component" value="Unplaced"/>
</dbReference>
<dbReference type="Proteomes" id="UP000694722">
    <property type="component" value="Unplaced"/>
</dbReference>
<dbReference type="Proteomes" id="UP000694723">
    <property type="component" value="Unplaced"/>
</dbReference>
<dbReference type="Proteomes" id="UP000694724">
    <property type="component" value="Unplaced"/>
</dbReference>
<dbReference type="Proteomes" id="UP000694725">
    <property type="component" value="Unplaced"/>
</dbReference>
<dbReference type="Proteomes" id="UP000694726">
    <property type="component" value="Unplaced"/>
</dbReference>
<dbReference type="Proteomes" id="UP000694727">
    <property type="component" value="Unplaced"/>
</dbReference>
<dbReference type="Proteomes" id="UP000694728">
    <property type="component" value="Unplaced"/>
</dbReference>
<dbReference type="GO" id="GO:0031902">
    <property type="term" value="C:late endosome membrane"/>
    <property type="evidence" value="ECO:0000318"/>
    <property type="project" value="GO_Central"/>
</dbReference>
<dbReference type="GO" id="GO:0005765">
    <property type="term" value="C:lysosomal membrane"/>
    <property type="evidence" value="ECO:0000318"/>
    <property type="project" value="GO_Central"/>
</dbReference>
<dbReference type="GO" id="GO:0042613">
    <property type="term" value="C:MHC class II protein complex"/>
    <property type="evidence" value="ECO:0000318"/>
    <property type="project" value="GO_Central"/>
</dbReference>
<dbReference type="GO" id="GO:0023026">
    <property type="term" value="F:MHC class II protein complex binding"/>
    <property type="evidence" value="ECO:0000318"/>
    <property type="project" value="GO_Central"/>
</dbReference>
<dbReference type="GO" id="GO:0042605">
    <property type="term" value="F:peptide antigen binding"/>
    <property type="evidence" value="ECO:0000318"/>
    <property type="project" value="GO_Central"/>
</dbReference>
<dbReference type="GO" id="GO:0002250">
    <property type="term" value="P:adaptive immune response"/>
    <property type="evidence" value="ECO:0007669"/>
    <property type="project" value="UniProtKB-KW"/>
</dbReference>
<dbReference type="GO" id="GO:0019886">
    <property type="term" value="P:antigen processing and presentation of exogenous peptide antigen via MHC class II"/>
    <property type="evidence" value="ECO:0000318"/>
    <property type="project" value="GO_Central"/>
</dbReference>
<dbReference type="GO" id="GO:0002503">
    <property type="term" value="P:peptide antigen assembly with MHC class II protein complex"/>
    <property type="evidence" value="ECO:0000318"/>
    <property type="project" value="GO_Central"/>
</dbReference>
<dbReference type="GO" id="GO:0050778">
    <property type="term" value="P:positive regulation of immune response"/>
    <property type="evidence" value="ECO:0000318"/>
    <property type="project" value="GO_Central"/>
</dbReference>
<dbReference type="GO" id="GO:0050870">
    <property type="term" value="P:positive regulation of T cell activation"/>
    <property type="evidence" value="ECO:0000318"/>
    <property type="project" value="GO_Central"/>
</dbReference>
<dbReference type="CDD" id="cd21001">
    <property type="entry name" value="IgC1_MHC_II_beta_HLA-DQ_I-A"/>
    <property type="match status" value="1"/>
</dbReference>
<dbReference type="FunFam" id="2.60.40.10:FF:000116">
    <property type="entry name" value="HLA class II histocompatibility antigen, DRB1-1 beta chain"/>
    <property type="match status" value="1"/>
</dbReference>
<dbReference type="FunFam" id="3.10.320.10:FF:000001">
    <property type="entry name" value="HLA class II histocompatibility antigen, DRB1-1 beta chain"/>
    <property type="match status" value="1"/>
</dbReference>
<dbReference type="Gene3D" id="3.10.320.10">
    <property type="entry name" value="Class II Histocompatibility Antigen, M Beta Chain, Chain B, domain 1"/>
    <property type="match status" value="1"/>
</dbReference>
<dbReference type="Gene3D" id="2.60.40.10">
    <property type="entry name" value="Immunoglobulins"/>
    <property type="match status" value="1"/>
</dbReference>
<dbReference type="InterPro" id="IPR007110">
    <property type="entry name" value="Ig-like_dom"/>
</dbReference>
<dbReference type="InterPro" id="IPR036179">
    <property type="entry name" value="Ig-like_dom_sf"/>
</dbReference>
<dbReference type="InterPro" id="IPR013783">
    <property type="entry name" value="Ig-like_fold"/>
</dbReference>
<dbReference type="InterPro" id="IPR003006">
    <property type="entry name" value="Ig/MHC_CS"/>
</dbReference>
<dbReference type="InterPro" id="IPR003597">
    <property type="entry name" value="Ig_C1-set"/>
</dbReference>
<dbReference type="InterPro" id="IPR050160">
    <property type="entry name" value="MHC/Immunoglobulin"/>
</dbReference>
<dbReference type="InterPro" id="IPR011162">
    <property type="entry name" value="MHC_I/II-like_Ag-recog"/>
</dbReference>
<dbReference type="InterPro" id="IPR014745">
    <property type="entry name" value="MHC_II_a/b_N"/>
</dbReference>
<dbReference type="InterPro" id="IPR000353">
    <property type="entry name" value="MHC_II_b_N"/>
</dbReference>
<dbReference type="PANTHER" id="PTHR19944:SF101">
    <property type="entry name" value="HLA CLASS II HISTOCOMPATIBILITY ANTIGEN, DQ BETA 1 CHAIN"/>
    <property type="match status" value="1"/>
</dbReference>
<dbReference type="PANTHER" id="PTHR19944">
    <property type="entry name" value="MHC CLASS II-RELATED"/>
    <property type="match status" value="1"/>
</dbReference>
<dbReference type="Pfam" id="PF07654">
    <property type="entry name" value="C1-set"/>
    <property type="match status" value="1"/>
</dbReference>
<dbReference type="Pfam" id="PF00969">
    <property type="entry name" value="MHC_II_beta"/>
    <property type="match status" value="1"/>
</dbReference>
<dbReference type="SMART" id="SM00407">
    <property type="entry name" value="IGc1"/>
    <property type="match status" value="1"/>
</dbReference>
<dbReference type="SMART" id="SM00921">
    <property type="entry name" value="MHC_II_beta"/>
    <property type="match status" value="1"/>
</dbReference>
<dbReference type="SUPFAM" id="SSF48726">
    <property type="entry name" value="Immunoglobulin"/>
    <property type="match status" value="1"/>
</dbReference>
<dbReference type="SUPFAM" id="SSF54452">
    <property type="entry name" value="MHC antigen-recognition domain"/>
    <property type="match status" value="1"/>
</dbReference>
<dbReference type="PROSITE" id="PS50835">
    <property type="entry name" value="IG_LIKE"/>
    <property type="match status" value="1"/>
</dbReference>
<dbReference type="PROSITE" id="PS00290">
    <property type="entry name" value="IG_MHC"/>
    <property type="match status" value="1"/>
</dbReference>
<organism>
    <name type="scientific">Sus scrofa</name>
    <name type="common">Pig</name>
    <dbReference type="NCBI Taxonomy" id="9823"/>
    <lineage>
        <taxon>Eukaryota</taxon>
        <taxon>Metazoa</taxon>
        <taxon>Chordata</taxon>
        <taxon>Craniata</taxon>
        <taxon>Vertebrata</taxon>
        <taxon>Euteleostomi</taxon>
        <taxon>Mammalia</taxon>
        <taxon>Eutheria</taxon>
        <taxon>Laurasiatheria</taxon>
        <taxon>Artiodactyla</taxon>
        <taxon>Suina</taxon>
        <taxon>Suidae</taxon>
        <taxon>Sus</taxon>
    </lineage>
</organism>
<keyword id="KW-1064">Adaptive immunity</keyword>
<keyword id="KW-1015">Disulfide bond</keyword>
<keyword id="KW-0325">Glycoprotein</keyword>
<keyword id="KW-0391">Immunity</keyword>
<keyword id="KW-0472">Membrane</keyword>
<keyword id="KW-0491">MHC II</keyword>
<keyword id="KW-1185">Reference proteome</keyword>
<keyword id="KW-0732">Signal</keyword>
<keyword id="KW-0812">Transmembrane</keyword>
<keyword id="KW-1133">Transmembrane helix</keyword>
<sequence>MVALRLPRGLWTAALTVMLVVLGAPVAEGRDSPQDFVVQFKGECYFYNGTQRVWSVDRYIYNQEEFLRFDSDMGEYRAVTPLGRPDADYLNGQKEALEQKRAELDTVCKHNYQIEEGTTLQRRVQPTVTISPSKAEALNHHNLLVCAVTDFYPSQVKVQWFRNGQEETAGVVSTPLIRNGDWTYQVLVMLEMNLQRGDVYTCRVEHSSLQSPILVEWRAQSESAQSKMLSGVGGFVLGLIFLGLGLFIRHRSQKGLVR</sequence>
<protein>
    <recommendedName>
        <fullName>SLA class II histocompatibility antigen, DQ haplotype D beta chain</fullName>
    </recommendedName>
</protein>
<accession>P15983</accession>
<comment type="subcellular location">
    <subcellularLocation>
        <location evidence="3">Membrane</location>
        <topology evidence="3">Single-pass type I membrane protein</topology>
    </subcellularLocation>
</comment>
<comment type="similarity">
    <text evidence="3">Belongs to the MHC class II family.</text>
</comment>